<proteinExistence type="inferred from homology"/>
<reference key="1">
    <citation type="journal article" date="2005" name="Nature">
        <title>Genomic sequence of the pathogenic and allergenic filamentous fungus Aspergillus fumigatus.</title>
        <authorList>
            <person name="Nierman W.C."/>
            <person name="Pain A."/>
            <person name="Anderson M.J."/>
            <person name="Wortman J.R."/>
            <person name="Kim H.S."/>
            <person name="Arroyo J."/>
            <person name="Berriman M."/>
            <person name="Abe K."/>
            <person name="Archer D.B."/>
            <person name="Bermejo C."/>
            <person name="Bennett J.W."/>
            <person name="Bowyer P."/>
            <person name="Chen D."/>
            <person name="Collins M."/>
            <person name="Coulsen R."/>
            <person name="Davies R."/>
            <person name="Dyer P.S."/>
            <person name="Farman M.L."/>
            <person name="Fedorova N."/>
            <person name="Fedorova N.D."/>
            <person name="Feldblyum T.V."/>
            <person name="Fischer R."/>
            <person name="Fosker N."/>
            <person name="Fraser A."/>
            <person name="Garcia J.L."/>
            <person name="Garcia M.J."/>
            <person name="Goble A."/>
            <person name="Goldman G.H."/>
            <person name="Gomi K."/>
            <person name="Griffith-Jones S."/>
            <person name="Gwilliam R."/>
            <person name="Haas B.J."/>
            <person name="Haas H."/>
            <person name="Harris D.E."/>
            <person name="Horiuchi H."/>
            <person name="Huang J."/>
            <person name="Humphray S."/>
            <person name="Jimenez J."/>
            <person name="Keller N."/>
            <person name="Khouri H."/>
            <person name="Kitamoto K."/>
            <person name="Kobayashi T."/>
            <person name="Konzack S."/>
            <person name="Kulkarni R."/>
            <person name="Kumagai T."/>
            <person name="Lafton A."/>
            <person name="Latge J.-P."/>
            <person name="Li W."/>
            <person name="Lord A."/>
            <person name="Lu C."/>
            <person name="Majoros W.H."/>
            <person name="May G.S."/>
            <person name="Miller B.L."/>
            <person name="Mohamoud Y."/>
            <person name="Molina M."/>
            <person name="Monod M."/>
            <person name="Mouyna I."/>
            <person name="Mulligan S."/>
            <person name="Murphy L.D."/>
            <person name="O'Neil S."/>
            <person name="Paulsen I."/>
            <person name="Penalva M.A."/>
            <person name="Pertea M."/>
            <person name="Price C."/>
            <person name="Pritchard B.L."/>
            <person name="Quail M.A."/>
            <person name="Rabbinowitsch E."/>
            <person name="Rawlins N."/>
            <person name="Rajandream M.A."/>
            <person name="Reichard U."/>
            <person name="Renauld H."/>
            <person name="Robson G.D."/>
            <person name="Rodriguez de Cordoba S."/>
            <person name="Rodriguez-Pena J.M."/>
            <person name="Ronning C.M."/>
            <person name="Rutter S."/>
            <person name="Salzberg S.L."/>
            <person name="Sanchez M."/>
            <person name="Sanchez-Ferrero J.C."/>
            <person name="Saunders D."/>
            <person name="Seeger K."/>
            <person name="Squares R."/>
            <person name="Squares S."/>
            <person name="Takeuchi M."/>
            <person name="Tekaia F."/>
            <person name="Turner G."/>
            <person name="Vazquez de Aldana C.R."/>
            <person name="Weidman J."/>
            <person name="White O."/>
            <person name="Woodward J.R."/>
            <person name="Yu J.-H."/>
            <person name="Fraser C.M."/>
            <person name="Galagan J.E."/>
            <person name="Asai K."/>
            <person name="Machida M."/>
            <person name="Hall N."/>
            <person name="Barrell B.G."/>
            <person name="Denning D.W."/>
        </authorList>
    </citation>
    <scope>NUCLEOTIDE SEQUENCE [LARGE SCALE GENOMIC DNA]</scope>
    <source>
        <strain>ATCC MYA-4609 / CBS 101355 / FGSC A1100 / Af293</strain>
    </source>
</reference>
<dbReference type="EMBL" id="AAHF01000016">
    <property type="protein sequence ID" value="EBA27188.1"/>
    <property type="status" value="ALT_INIT"/>
    <property type="molecule type" value="Genomic_DNA"/>
</dbReference>
<dbReference type="RefSeq" id="XP_001481542.1">
    <property type="nucleotide sequence ID" value="XM_001481492.1"/>
</dbReference>
<dbReference type="SMR" id="A4DA73"/>
<dbReference type="FunCoup" id="A4DA73">
    <property type="interactions" value="12"/>
</dbReference>
<dbReference type="STRING" id="330879.A4DA73"/>
<dbReference type="GeneID" id="5077094"/>
<dbReference type="KEGG" id="afm:AFUA_4G03645"/>
<dbReference type="eggNOG" id="ENOG502S6EF">
    <property type="taxonomic scope" value="Eukaryota"/>
</dbReference>
<dbReference type="HOGENOM" id="CLU_1331665_0_0_1"/>
<dbReference type="InParanoid" id="A4DA73"/>
<dbReference type="OrthoDB" id="529194at2759"/>
<dbReference type="Proteomes" id="UP000002530">
    <property type="component" value="Chromosome 4"/>
</dbReference>
<dbReference type="GO" id="GO:0005759">
    <property type="term" value="C:mitochondrial matrix"/>
    <property type="evidence" value="ECO:0000318"/>
    <property type="project" value="GO_Central"/>
</dbReference>
<dbReference type="GO" id="GO:0044183">
    <property type="term" value="F:protein folding chaperone"/>
    <property type="evidence" value="ECO:0000318"/>
    <property type="project" value="GO_Central"/>
</dbReference>
<dbReference type="GO" id="GO:0034551">
    <property type="term" value="P:mitochondrial respiratory chain complex III assembly"/>
    <property type="evidence" value="ECO:0000318"/>
    <property type="project" value="GO_Central"/>
</dbReference>
<dbReference type="CDD" id="cd20267">
    <property type="entry name" value="Complex1_LYR_LYRM7"/>
    <property type="match status" value="1"/>
</dbReference>
<dbReference type="InterPro" id="IPR045298">
    <property type="entry name" value="Complex1_LYR_LYRM7"/>
</dbReference>
<dbReference type="InterPro" id="IPR050435">
    <property type="entry name" value="MZM1/LYRM7"/>
</dbReference>
<dbReference type="PANTHER" id="PTHR46749">
    <property type="entry name" value="COMPLEX III ASSEMBLY FACTOR LYRM7"/>
    <property type="match status" value="1"/>
</dbReference>
<dbReference type="PANTHER" id="PTHR46749:SF1">
    <property type="entry name" value="COMPLEX III ASSEMBLY FACTOR LYRM7"/>
    <property type="match status" value="1"/>
</dbReference>
<keyword id="KW-0143">Chaperone</keyword>
<keyword id="KW-0496">Mitochondrion</keyword>
<keyword id="KW-1185">Reference proteome</keyword>
<keyword id="KW-0809">Transit peptide</keyword>
<sequence length="115" mass="13136">MASQTAVTARSAYRQILRATRIAFQDDFRVLVAARQEARRQFDEHRREGIDTPMQINHAKEVAAILRHNIVQGVRDSNDENGKWELRIHDDIERGDNDSIRVGGKKVKVDKPCSA</sequence>
<protein>
    <recommendedName>
        <fullName>Mitochondrial zinc maintenance protein 1, mitochondrial</fullName>
    </recommendedName>
</protein>
<accession>A4DA73</accession>
<organism>
    <name type="scientific">Aspergillus fumigatus (strain ATCC MYA-4609 / CBS 101355 / FGSC A1100 / Af293)</name>
    <name type="common">Neosartorya fumigata</name>
    <dbReference type="NCBI Taxonomy" id="330879"/>
    <lineage>
        <taxon>Eukaryota</taxon>
        <taxon>Fungi</taxon>
        <taxon>Dikarya</taxon>
        <taxon>Ascomycota</taxon>
        <taxon>Pezizomycotina</taxon>
        <taxon>Eurotiomycetes</taxon>
        <taxon>Eurotiomycetidae</taxon>
        <taxon>Eurotiales</taxon>
        <taxon>Aspergillaceae</taxon>
        <taxon>Aspergillus</taxon>
        <taxon>Aspergillus subgen. Fumigati</taxon>
    </lineage>
</organism>
<comment type="function">
    <text evidence="1">Assembly factor required for Rieske Fe-S protein RIP1 incorporation into the cytochrome b-c1 (CIII) complex. Functions as a chaperone, binding to this subunit within the mitochondrial matrix and stabilizing it prior to its translocation and insertion into the late CIII dimeric intermediate within the mitochondrial inner membrane. Modulates the mitochondrial matrix zinc pool (By similarity).</text>
</comment>
<comment type="subunit">
    <text evidence="1">Interacts with RIP1.</text>
</comment>
<comment type="subcellular location">
    <subcellularLocation>
        <location evidence="1">Mitochondrion matrix</location>
    </subcellularLocation>
</comment>
<comment type="similarity">
    <text evidence="4">Belongs to the complex I LYR family. MZM1 subfamily.</text>
</comment>
<comment type="sequence caution" evidence="4">
    <conflict type="erroneous initiation">
        <sequence resource="EMBL-CDS" id="EBA27188"/>
    </conflict>
    <text>Extended N-terminus.</text>
</comment>
<evidence type="ECO:0000250" key="1"/>
<evidence type="ECO:0000255" key="2"/>
<evidence type="ECO:0000256" key="3">
    <source>
        <dbReference type="SAM" id="MobiDB-lite"/>
    </source>
</evidence>
<evidence type="ECO:0000305" key="4"/>
<feature type="transit peptide" description="Mitochondrion" evidence="2">
    <location>
        <begin position="1"/>
        <end position="36"/>
    </location>
</feature>
<feature type="chain" id="PRO_0000405482" description="Mitochondrial zinc maintenance protein 1, mitochondrial">
    <location>
        <begin position="37"/>
        <end position="115"/>
    </location>
</feature>
<feature type="region of interest" description="Disordered" evidence="3">
    <location>
        <begin position="95"/>
        <end position="115"/>
    </location>
</feature>
<name>MZM1_ASPFU</name>
<gene>
    <name type="primary">MZM1</name>
    <name type="ORF">AFUA_4G03645</name>
</gene>